<comment type="function">
    <text evidence="1">One of several proteins that assist in the late maturation steps of the functional core of the 30S ribosomal subunit. Associates with free 30S ribosomal subunits (but not with 30S subunits that are part of 70S ribosomes or polysomes). Required for efficient processing of 16S rRNA. May interact with the 5'-terminal helix region of 16S rRNA.</text>
</comment>
<comment type="subunit">
    <text evidence="1">Monomer. Binds 30S ribosomal subunits, but not 50S ribosomal subunits or 70S ribosomes.</text>
</comment>
<comment type="subcellular location">
    <subcellularLocation>
        <location evidence="1">Cytoplasm</location>
    </subcellularLocation>
</comment>
<comment type="similarity">
    <text evidence="1">Belongs to the RbfA family.</text>
</comment>
<reference key="1">
    <citation type="journal article" date="2003" name="Proc. Natl. Acad. Sci. U.S.A.">
        <title>Genome sequence of the cyanobacterium Prochlorococcus marinus SS120, a nearly minimal oxyphototrophic genome.</title>
        <authorList>
            <person name="Dufresne A."/>
            <person name="Salanoubat M."/>
            <person name="Partensky F."/>
            <person name="Artiguenave F."/>
            <person name="Axmann I.M."/>
            <person name="Barbe V."/>
            <person name="Duprat S."/>
            <person name="Galperin M.Y."/>
            <person name="Koonin E.V."/>
            <person name="Le Gall F."/>
            <person name="Makarova K.S."/>
            <person name="Ostrowski M."/>
            <person name="Oztas S."/>
            <person name="Robert C."/>
            <person name="Rogozin I.B."/>
            <person name="Scanlan D.J."/>
            <person name="Tandeau de Marsac N."/>
            <person name="Weissenbach J."/>
            <person name="Wincker P."/>
            <person name="Wolf Y.I."/>
            <person name="Hess W.R."/>
        </authorList>
    </citation>
    <scope>NUCLEOTIDE SEQUENCE [LARGE SCALE GENOMIC DNA]</scope>
    <source>
        <strain>SARG / CCMP1375 / SS120</strain>
    </source>
</reference>
<dbReference type="EMBL" id="AE017126">
    <property type="protein sequence ID" value="AAP99178.1"/>
    <property type="molecule type" value="Genomic_DNA"/>
</dbReference>
<dbReference type="RefSeq" id="NP_874526.1">
    <property type="nucleotide sequence ID" value="NC_005042.1"/>
</dbReference>
<dbReference type="RefSeq" id="WP_011124287.1">
    <property type="nucleotide sequence ID" value="NC_005042.1"/>
</dbReference>
<dbReference type="SMR" id="Q7VE81"/>
<dbReference type="STRING" id="167539.Pro_0132"/>
<dbReference type="EnsemblBacteria" id="AAP99178">
    <property type="protein sequence ID" value="AAP99178"/>
    <property type="gene ID" value="Pro_0132"/>
</dbReference>
<dbReference type="KEGG" id="pma:Pro_0132"/>
<dbReference type="PATRIC" id="fig|167539.5.peg.138"/>
<dbReference type="eggNOG" id="COG0858">
    <property type="taxonomic scope" value="Bacteria"/>
</dbReference>
<dbReference type="HOGENOM" id="CLU_089475_2_1_3"/>
<dbReference type="OrthoDB" id="307788at2"/>
<dbReference type="Proteomes" id="UP000001420">
    <property type="component" value="Chromosome"/>
</dbReference>
<dbReference type="GO" id="GO:0005829">
    <property type="term" value="C:cytosol"/>
    <property type="evidence" value="ECO:0007669"/>
    <property type="project" value="TreeGrafter"/>
</dbReference>
<dbReference type="GO" id="GO:0043024">
    <property type="term" value="F:ribosomal small subunit binding"/>
    <property type="evidence" value="ECO:0007669"/>
    <property type="project" value="TreeGrafter"/>
</dbReference>
<dbReference type="GO" id="GO:0030490">
    <property type="term" value="P:maturation of SSU-rRNA"/>
    <property type="evidence" value="ECO:0007669"/>
    <property type="project" value="UniProtKB-UniRule"/>
</dbReference>
<dbReference type="Gene3D" id="3.30.300.20">
    <property type="match status" value="1"/>
</dbReference>
<dbReference type="HAMAP" id="MF_00003">
    <property type="entry name" value="RbfA"/>
    <property type="match status" value="1"/>
</dbReference>
<dbReference type="InterPro" id="IPR015946">
    <property type="entry name" value="KH_dom-like_a/b"/>
</dbReference>
<dbReference type="InterPro" id="IPR000238">
    <property type="entry name" value="RbfA"/>
</dbReference>
<dbReference type="InterPro" id="IPR023799">
    <property type="entry name" value="RbfA_dom_sf"/>
</dbReference>
<dbReference type="InterPro" id="IPR020053">
    <property type="entry name" value="Ribosome-bd_factorA_CS"/>
</dbReference>
<dbReference type="NCBIfam" id="TIGR00082">
    <property type="entry name" value="rbfA"/>
    <property type="match status" value="1"/>
</dbReference>
<dbReference type="PANTHER" id="PTHR33515">
    <property type="entry name" value="RIBOSOME-BINDING FACTOR A, CHLOROPLASTIC-RELATED"/>
    <property type="match status" value="1"/>
</dbReference>
<dbReference type="PANTHER" id="PTHR33515:SF1">
    <property type="entry name" value="RIBOSOME-BINDING FACTOR A, CHLOROPLASTIC-RELATED"/>
    <property type="match status" value="1"/>
</dbReference>
<dbReference type="Pfam" id="PF02033">
    <property type="entry name" value="RBFA"/>
    <property type="match status" value="1"/>
</dbReference>
<dbReference type="SUPFAM" id="SSF89919">
    <property type="entry name" value="Ribosome-binding factor A, RbfA"/>
    <property type="match status" value="1"/>
</dbReference>
<dbReference type="PROSITE" id="PS01319">
    <property type="entry name" value="RBFA"/>
    <property type="match status" value="1"/>
</dbReference>
<sequence>MAQSRRVEKVAALIRKEMSELLSNGIRDQRVNTTMITITEVEVSGDLQHCKIFVSIYGNEIQKDEVFSGLEASQSFLKGELGRRLQMRRAPEVVFKLDRGMEKGISVLNLLEKLEAERNIKDKKLIEFQE</sequence>
<proteinExistence type="inferred from homology"/>
<evidence type="ECO:0000255" key="1">
    <source>
        <dbReference type="HAMAP-Rule" id="MF_00003"/>
    </source>
</evidence>
<organism>
    <name type="scientific">Prochlorococcus marinus (strain SARG / CCMP1375 / SS120)</name>
    <dbReference type="NCBI Taxonomy" id="167539"/>
    <lineage>
        <taxon>Bacteria</taxon>
        <taxon>Bacillati</taxon>
        <taxon>Cyanobacteriota</taxon>
        <taxon>Cyanophyceae</taxon>
        <taxon>Synechococcales</taxon>
        <taxon>Prochlorococcaceae</taxon>
        <taxon>Prochlorococcus</taxon>
    </lineage>
</organism>
<protein>
    <recommendedName>
        <fullName evidence="1">Ribosome-binding factor A</fullName>
    </recommendedName>
</protein>
<keyword id="KW-0963">Cytoplasm</keyword>
<keyword id="KW-1185">Reference proteome</keyword>
<keyword id="KW-0690">Ribosome biogenesis</keyword>
<name>RBFA_PROMA</name>
<accession>Q7VE81</accession>
<gene>
    <name evidence="1" type="primary">rbfA</name>
    <name type="ordered locus">Pro_0132</name>
</gene>
<feature type="chain" id="PRO_0000102710" description="Ribosome-binding factor A">
    <location>
        <begin position="1"/>
        <end position="130"/>
    </location>
</feature>